<accession>Q95YE9</accession>
<accession>Q95NL2</accession>
<comment type="function">
    <text evidence="2 3 4 5">DNA damage checkpoint protein required for DNA damage-induced cell cycle arrest and apoptosis, thereby playing a role in genome stability (PubMed:10882129, PubMed:16951081). Regulator of telomere length (PubMed:11641227, PubMed:11696330).</text>
</comment>
<comment type="subcellular location">
    <subcellularLocation>
        <location evidence="7">Nucleus</location>
    </subcellularLocation>
    <subcellularLocation>
        <location evidence="7">Chromosome</location>
        <location evidence="7">Telomere</location>
    </subcellularLocation>
</comment>
<comment type="similarity">
    <text evidence="7">Belongs to the TEL2 family.</text>
</comment>
<name>CLK2_CAEEL</name>
<protein>
    <recommendedName>
        <fullName>Telomere length regulation protein clk-2</fullName>
    </recommendedName>
    <alternativeName>
        <fullName>Clock abnormal protein 2</fullName>
    </alternativeName>
</protein>
<feature type="chain" id="PRO_0000215560" description="Telomere length regulation protein clk-2">
    <location>
        <begin position="1"/>
        <end position="877"/>
    </location>
</feature>
<feature type="region of interest" description="Disordered" evidence="1">
    <location>
        <begin position="488"/>
        <end position="509"/>
    </location>
</feature>
<feature type="compositionally biased region" description="Polar residues" evidence="1">
    <location>
        <begin position="488"/>
        <end position="501"/>
    </location>
</feature>
<dbReference type="EMBL" id="AJ320257">
    <property type="protein sequence ID" value="CAC44622.1"/>
    <property type="molecule type" value="mRNA"/>
</dbReference>
<dbReference type="EMBL" id="AF400665">
    <property type="protein sequence ID" value="AAL28024.1"/>
    <property type="molecule type" value="mRNA"/>
</dbReference>
<dbReference type="EMBL" id="FO080423">
    <property type="protein sequence ID" value="CCD63593.1"/>
    <property type="molecule type" value="Genomic_DNA"/>
</dbReference>
<dbReference type="RefSeq" id="NP_001370399.1">
    <property type="nucleotide sequence ID" value="NM_001382917.2"/>
</dbReference>
<dbReference type="RefSeq" id="NP_498650.2">
    <property type="nucleotide sequence ID" value="NM_066249.3"/>
</dbReference>
<dbReference type="BioGRID" id="41273">
    <property type="interactions" value="91"/>
</dbReference>
<dbReference type="FunCoup" id="Q95YE9">
    <property type="interactions" value="1051"/>
</dbReference>
<dbReference type="STRING" id="6239.C07H6.6.1"/>
<dbReference type="PaxDb" id="6239-C07H6.6"/>
<dbReference type="PeptideAtlas" id="Q95YE9"/>
<dbReference type="EnsemblMetazoa" id="C07H6.6.1">
    <property type="protein sequence ID" value="C07H6.6.1"/>
    <property type="gene ID" value="WBGene00000537"/>
</dbReference>
<dbReference type="GeneID" id="176065"/>
<dbReference type="UCSC" id="C07H6.6">
    <property type="organism name" value="c. elegans"/>
</dbReference>
<dbReference type="AGR" id="WB:WBGene00000537"/>
<dbReference type="WormBase" id="C07H6.6">
    <property type="protein sequence ID" value="CE30240"/>
    <property type="gene ID" value="WBGene00000537"/>
    <property type="gene designation" value="clk-2"/>
</dbReference>
<dbReference type="eggNOG" id="KOG4346">
    <property type="taxonomic scope" value="Eukaryota"/>
</dbReference>
<dbReference type="GeneTree" id="ENSGT00390000006698"/>
<dbReference type="HOGENOM" id="CLU_005579_0_0_1"/>
<dbReference type="InParanoid" id="Q95YE9"/>
<dbReference type="OMA" id="ASMVYVR"/>
<dbReference type="OrthoDB" id="10258062at2759"/>
<dbReference type="PhylomeDB" id="Q95YE9"/>
<dbReference type="PRO" id="PR:Q95YE9"/>
<dbReference type="Proteomes" id="UP000001940">
    <property type="component" value="Chromosome III"/>
</dbReference>
<dbReference type="Bgee" id="WBGene00000537">
    <property type="expression patterns" value="Expressed in germ line (C elegans) and 4 other cell types or tissues"/>
</dbReference>
<dbReference type="GO" id="GO:0000781">
    <property type="term" value="C:chromosome, telomeric region"/>
    <property type="evidence" value="ECO:0007669"/>
    <property type="project" value="UniProtKB-SubCell"/>
</dbReference>
<dbReference type="GO" id="GO:0005737">
    <property type="term" value="C:cytoplasm"/>
    <property type="evidence" value="ECO:0000314"/>
    <property type="project" value="WormBase"/>
</dbReference>
<dbReference type="GO" id="GO:0005829">
    <property type="term" value="C:cytosol"/>
    <property type="evidence" value="ECO:0000318"/>
    <property type="project" value="GO_Central"/>
</dbReference>
<dbReference type="GO" id="GO:0005634">
    <property type="term" value="C:nucleus"/>
    <property type="evidence" value="ECO:0007669"/>
    <property type="project" value="UniProtKB-SubCell"/>
</dbReference>
<dbReference type="GO" id="GO:0051879">
    <property type="term" value="F:Hsp90 protein binding"/>
    <property type="evidence" value="ECO:0000318"/>
    <property type="project" value="GO_Central"/>
</dbReference>
<dbReference type="GO" id="GO:0042162">
    <property type="term" value="F:telomeric DNA binding"/>
    <property type="evidence" value="ECO:0000318"/>
    <property type="project" value="GO_Central"/>
</dbReference>
<dbReference type="GO" id="GO:0051083">
    <property type="term" value="P:'de novo' cotranslational protein folding"/>
    <property type="evidence" value="ECO:0000318"/>
    <property type="project" value="GO_Central"/>
</dbReference>
<dbReference type="GO" id="GO:0008340">
    <property type="term" value="P:determination of adult lifespan"/>
    <property type="evidence" value="ECO:0000315"/>
    <property type="project" value="WormBase"/>
</dbReference>
<dbReference type="GO" id="GO:0000077">
    <property type="term" value="P:DNA damage checkpoint signaling"/>
    <property type="evidence" value="ECO:0000315"/>
    <property type="project" value="WormBase"/>
</dbReference>
<dbReference type="GO" id="GO:0009411">
    <property type="term" value="P:response to UV"/>
    <property type="evidence" value="ECO:0000315"/>
    <property type="project" value="WormBase"/>
</dbReference>
<dbReference type="GO" id="GO:0010165">
    <property type="term" value="P:response to X-ray"/>
    <property type="evidence" value="ECO:0000315"/>
    <property type="project" value="WormBase"/>
</dbReference>
<dbReference type="GO" id="GO:0000723">
    <property type="term" value="P:telomere maintenance"/>
    <property type="evidence" value="ECO:0000314"/>
    <property type="project" value="WormBase"/>
</dbReference>
<dbReference type="Gene3D" id="1.25.40.720">
    <property type="entry name" value="Telomere length regulation protein 2, C-terminal domain"/>
    <property type="match status" value="1"/>
</dbReference>
<dbReference type="InterPro" id="IPR038528">
    <property type="entry name" value="TEL2_C_sf"/>
</dbReference>
<dbReference type="InterPro" id="IPR051970">
    <property type="entry name" value="TEL2_Regulation"/>
</dbReference>
<dbReference type="InterPro" id="IPR019337">
    <property type="entry name" value="Telomere_length_regulation_dom"/>
</dbReference>
<dbReference type="PANTHER" id="PTHR15830">
    <property type="entry name" value="TELOMERE LENGTH REGULATION PROTEIN TEL2 FAMILY MEMBER"/>
    <property type="match status" value="1"/>
</dbReference>
<dbReference type="PANTHER" id="PTHR15830:SF10">
    <property type="entry name" value="TELOMERE LENGTH REGULATION PROTEIN TEL2 HOMOLOG"/>
    <property type="match status" value="1"/>
</dbReference>
<dbReference type="Pfam" id="PF10193">
    <property type="entry name" value="Telomere_reg-2"/>
    <property type="match status" value="1"/>
</dbReference>
<reference key="1">
    <citation type="journal article" date="2001" name="Curr. Biol.">
        <title>C. elegans clk-2, a gene that limits life span, encodes a telomere length regulator similar to yeast telomere binding protein Tel2p.</title>
        <authorList>
            <person name="Lim C.S."/>
            <person name="Mian S."/>
            <person name="Dernburg A.F."/>
            <person name="Campisi J."/>
        </authorList>
    </citation>
    <scope>NUCLEOTIDE SEQUENCE [MRNA]</scope>
    <scope>FUNCTION</scope>
</reference>
<reference key="2">
    <citation type="journal article" date="2001" name="Development">
        <title>The C. elegans maternal-effect gene clk-2 is essential for embryonic development, encodes a protein homologous to yeast Tel2p and affects telomere length.</title>
        <authorList>
            <person name="Benard C."/>
            <person name="McCright B."/>
            <person name="Zhang Y."/>
            <person name="Felkai S."/>
            <person name="Lakowski B."/>
            <person name="Hekimi S."/>
        </authorList>
    </citation>
    <scope>NUCLEOTIDE SEQUENCE [MRNA]</scope>
    <scope>FUNCTION</scope>
</reference>
<reference key="3">
    <citation type="journal article" date="1998" name="Science">
        <title>Genome sequence of the nematode C. elegans: a platform for investigating biology.</title>
        <authorList>
            <consortium name="The C. elegans sequencing consortium"/>
        </authorList>
    </citation>
    <scope>NUCLEOTIDE SEQUENCE [LARGE SCALE GENOMIC DNA]</scope>
    <source>
        <strain>Bristol N2</strain>
    </source>
</reference>
<reference key="4">
    <citation type="journal article" date="2000" name="Mol. Cell">
        <title>A conserved checkpoint pathway mediates DNA damage-induced apoptosis and cell cycle arrest in C. elegans.</title>
        <authorList>
            <person name="Gartner A."/>
            <person name="Milstein S."/>
            <person name="Ahmed S."/>
            <person name="Hodgkin J."/>
            <person name="Hengartner M.O."/>
        </authorList>
    </citation>
    <scope>FUNCTION</scope>
</reference>
<reference key="5">
    <citation type="journal article" date="2006" name="Genetics">
        <title>Mutator phenotype of Caenorhabditis elegans DNA damage checkpoint mutants.</title>
        <authorList>
            <person name="Harris J."/>
            <person name="Lowden M."/>
            <person name="Clejan I."/>
            <person name="Tzoneva M."/>
            <person name="Thomas J.H."/>
            <person name="Hodgkin J."/>
            <person name="Ahmed S."/>
        </authorList>
    </citation>
    <scope>FUNCTION</scope>
</reference>
<evidence type="ECO:0000256" key="1">
    <source>
        <dbReference type="SAM" id="MobiDB-lite"/>
    </source>
</evidence>
<evidence type="ECO:0000269" key="2">
    <source>
    </source>
</evidence>
<evidence type="ECO:0000269" key="3">
    <source>
    </source>
</evidence>
<evidence type="ECO:0000269" key="4">
    <source>
    </source>
</evidence>
<evidence type="ECO:0000269" key="5">
    <source>
    </source>
</evidence>
<evidence type="ECO:0000303" key="6">
    <source>
    </source>
</evidence>
<evidence type="ECO:0000305" key="7"/>
<sequence length="877" mass="99836">MNLRSRLVNATERAVLFQIFKDVQNDPEKYDNAVEAICESIDYFGKFLTDSEYLTQIKPILDTQCPTKSIICFSKCLTKVSTDINTTTFRDVITMLDWLKYVVEKSLTSAICSSLKVKETDVSAVQLYREFASACSNIPEKVSNCCAKALSGEHVKYINTVKWIFKMNLVQGIQKAMLLAHDDIVTAAPFTSFYGSGGPYMKTVAEIISSGRNIDITNKDGLLVQMIEWIGSLNNFDSQWRRMMFLIFQEPTYQGIQVHESLLTTLFLISKSDQILKRCIEATDLTGTLKRVVMVKLPFQRVLKRKTIEILINFVYRTKEQFAIQLLETSVKIWSDLNYAKSAPESQERHIVRMILYLVHLFRTCSSIDWESLFLNSMDGVHCRMSMLPMYVQSGIFVNQALCKQATKHRSKTHGSDEQPPETLEENKFVSSEVGKIWFEEMTSILEHGFNSSTVKDSERVRETANEITKDDSGEEFEETNAQRLQNNKDSAAITSKNNLRLDSDDDEDFPDYQVNESEKIFKNLEIGEEPKNKVTPPAYIADAFEMLLEKEKYEVFEAAFFNITNLINRRPIGFPQIAEKLFIRILHLQNNFGTPKFKETVDEIAVACITQRPEIVPSVVRLIIAPGQGFSIKQRLLHYIHNAADGMGALDKKLEECVMAQQLRIGGPTLSIILHRTINTDYDDEDEDPHRLLVPEWRRMVDARIAANTRRIGTTREPPRAGVVNRLAQAAKYMFYPLLVLPRGENASLLGKDSDLLASLIMVASMVYVRCGVCPQIHRMSSELISYATPHRFSENAKLRTACIIAHLNVTTLLPGDLMDELFDVPALIGWFDWANSVLVNASSSQLEKDMTRQFGHSVTKHLQRYHPAVLQHQDV</sequence>
<proteinExistence type="evidence at transcript level"/>
<keyword id="KW-0158">Chromosome</keyword>
<keyword id="KW-0238">DNA-binding</keyword>
<keyword id="KW-0539">Nucleus</keyword>
<keyword id="KW-1185">Reference proteome</keyword>
<keyword id="KW-0779">Telomere</keyword>
<organism>
    <name type="scientific">Caenorhabditis elegans</name>
    <dbReference type="NCBI Taxonomy" id="6239"/>
    <lineage>
        <taxon>Eukaryota</taxon>
        <taxon>Metazoa</taxon>
        <taxon>Ecdysozoa</taxon>
        <taxon>Nematoda</taxon>
        <taxon>Chromadorea</taxon>
        <taxon>Rhabditida</taxon>
        <taxon>Rhabditina</taxon>
        <taxon>Rhabditomorpha</taxon>
        <taxon>Rhabditoidea</taxon>
        <taxon>Rhabditidae</taxon>
        <taxon>Peloderinae</taxon>
        <taxon>Caenorhabditis</taxon>
    </lineage>
</organism>
<gene>
    <name type="primary">clk-2</name>
    <name evidence="6" type="synonym">rad-5</name>
    <name type="ORF">C07H6.6</name>
</gene>